<gene>
    <name type="primary">spvB</name>
    <name type="synonym">mkaA</name>
</gene>
<protein>
    <recommendedName>
        <fullName>Mono(ADP-ribosyl)transferase SpvB</fullName>
        <shortName>mADPRT</shortName>
        <shortName>mART</shortName>
        <ecNumber>2.4.2.31</ecNumber>
    </recommendedName>
    <alternativeName>
        <fullName>65 kDa virulence protein</fullName>
    </alternativeName>
    <alternativeName>
        <fullName>NAD(+)--arginine ADP-ribosyltransferase</fullName>
    </alternativeName>
    <alternativeName>
        <fullName>Toxin SpvB</fullName>
    </alternativeName>
</protein>
<keyword id="KW-0002">3D-structure</keyword>
<keyword id="KW-0903">Direct protein sequencing</keyword>
<keyword id="KW-0328">Glycosyltransferase</keyword>
<keyword id="KW-0520">NAD</keyword>
<keyword id="KW-0521">NADP</keyword>
<keyword id="KW-0547">Nucleotide-binding</keyword>
<keyword id="KW-0548">Nucleotidyltransferase</keyword>
<keyword id="KW-0614">Plasmid</keyword>
<keyword id="KW-0964">Secreted</keyword>
<keyword id="KW-0800">Toxin</keyword>
<keyword id="KW-0808">Transferase</keyword>
<keyword id="KW-0843">Virulence</keyword>
<name>SPVB_SALTM</name>
<organism>
    <name type="scientific">Salmonella typhimurium</name>
    <dbReference type="NCBI Taxonomy" id="90371"/>
    <lineage>
        <taxon>Bacteria</taxon>
        <taxon>Pseudomonadati</taxon>
        <taxon>Pseudomonadota</taxon>
        <taxon>Gammaproteobacteria</taxon>
        <taxon>Enterobacterales</taxon>
        <taxon>Enterobacteriaceae</taxon>
        <taxon>Salmonella</taxon>
    </lineage>
</organism>
<evidence type="ECO:0000255" key="1">
    <source>
        <dbReference type="PROSITE-ProRule" id="PRU01340"/>
    </source>
</evidence>
<evidence type="ECO:0000269" key="2">
    <source>
    </source>
</evidence>
<evidence type="ECO:0000269" key="3">
    <source>
    </source>
</evidence>
<evidence type="ECO:0000269" key="4">
    <source>
    </source>
</evidence>
<evidence type="ECO:0000269" key="5">
    <source>
    </source>
</evidence>
<evidence type="ECO:0000305" key="6"/>
<evidence type="ECO:0007829" key="7">
    <source>
        <dbReference type="PDB" id="2GWM"/>
    </source>
</evidence>
<proteinExistence type="evidence at protein level"/>
<feature type="chain" id="PRO_0000221666" description="Mono(ADP-ribosyl)transferase SpvB">
    <location>
        <begin position="1"/>
        <end position="591"/>
    </location>
</feature>
<feature type="domain" description="TR mART core" evidence="1">
    <location>
        <begin position="373"/>
        <end position="576"/>
    </location>
</feature>
<feature type="active site" evidence="1">
    <location>
        <position position="471"/>
    </location>
</feature>
<feature type="active site" evidence="1">
    <location>
        <position position="501"/>
    </location>
</feature>
<feature type="active site" evidence="1">
    <location>
        <position position="538"/>
    </location>
</feature>
<feature type="binding site" evidence="5">
    <location>
        <position position="414"/>
    </location>
    <ligand>
        <name>NAD(+)</name>
        <dbReference type="ChEBI" id="CHEBI:57540"/>
    </ligand>
</feature>
<feature type="binding site" evidence="5">
    <location>
        <begin position="471"/>
        <end position="477"/>
    </location>
    <ligand>
        <name>NAD(+)</name>
        <dbReference type="ChEBI" id="CHEBI:57540"/>
    </ligand>
</feature>
<feature type="binding site" evidence="5">
    <location>
        <position position="538"/>
    </location>
    <ligand>
        <name>NAD(+)</name>
        <dbReference type="ChEBI" id="CHEBI:57540"/>
    </ligand>
</feature>
<feature type="helix" evidence="7">
    <location>
        <begin position="393"/>
        <end position="403"/>
    </location>
</feature>
<feature type="helix" evidence="7">
    <location>
        <begin position="406"/>
        <end position="414"/>
    </location>
</feature>
<feature type="helix" evidence="7">
    <location>
        <begin position="420"/>
        <end position="429"/>
    </location>
</feature>
<feature type="strand" evidence="7">
    <location>
        <begin position="432"/>
        <end position="436"/>
    </location>
</feature>
<feature type="helix" evidence="7">
    <location>
        <begin position="440"/>
        <end position="459"/>
    </location>
</feature>
<feature type="strand" evidence="7">
    <location>
        <begin position="468"/>
        <end position="473"/>
    </location>
</feature>
<feature type="helix" evidence="7">
    <location>
        <begin position="478"/>
        <end position="480"/>
    </location>
</feature>
<feature type="helix" evidence="7">
    <location>
        <begin position="481"/>
        <end position="487"/>
    </location>
</feature>
<feature type="strand" evidence="7">
    <location>
        <begin position="493"/>
        <end position="496"/>
    </location>
</feature>
<feature type="strand" evidence="7">
    <location>
        <begin position="500"/>
        <end position="505"/>
    </location>
</feature>
<feature type="strand" evidence="7">
    <location>
        <begin position="510"/>
        <end position="517"/>
    </location>
</feature>
<feature type="helix" evidence="7">
    <location>
        <begin position="528"/>
        <end position="530"/>
    </location>
</feature>
<feature type="strand" evidence="7">
    <location>
        <begin position="531"/>
        <end position="533"/>
    </location>
</feature>
<feature type="strand" evidence="7">
    <location>
        <begin position="539"/>
        <end position="541"/>
    </location>
</feature>
<feature type="strand" evidence="7">
    <location>
        <begin position="545"/>
        <end position="557"/>
    </location>
</feature>
<feature type="helix" evidence="7">
    <location>
        <begin position="558"/>
        <end position="565"/>
    </location>
</feature>
<feature type="helix" evidence="7">
    <location>
        <begin position="577"/>
        <end position="579"/>
    </location>
</feature>
<feature type="strand" evidence="7">
    <location>
        <begin position="582"/>
        <end position="588"/>
    </location>
</feature>
<reference key="1">
    <citation type="journal article" date="1989" name="Microb. Pathog.">
        <title>Identification and genetic analysis of mkaA -- a gene of the Salmonella typhimurium virulence plasmid necessary for intracellular growth.</title>
        <authorList>
            <person name="Taira S."/>
            <person name="Rhen M."/>
        </authorList>
    </citation>
    <scope>NUCLEOTIDE SEQUENCE [GENOMIC DNA]</scope>
    <source>
        <strain>TML R66</strain>
    </source>
</reference>
<reference key="2">
    <citation type="journal article" date="1991" name="FEMS Microbiol. Lett.">
        <title>Amino-terminal sequence analysis of four plasmid-encoded virulence-associated proteins of Salmonella typhimurium.</title>
        <authorList>
            <person name="Taira S."/>
            <person name="Baumann M."/>
            <person name="Riikonen P."/>
            <person name="Sukupolvi S."/>
            <person name="Rhen M."/>
        </authorList>
    </citation>
    <scope>PROTEIN SEQUENCE OF 1-10</scope>
    <source>
        <plasmid>pEX102</plasmid>
    </source>
</reference>
<reference key="3">
    <citation type="journal article" date="2000" name="Mol. Microbiol.">
        <title>The spvB gene-product of the Salmonella enterica virulence plasmid is a mono(ADP-ribosyl)transferase.</title>
        <authorList>
            <person name="Otto H."/>
            <person name="Tezcan-Merdol D."/>
            <person name="Girisch R."/>
            <person name="Haag F."/>
            <person name="Rhen M."/>
            <person name="Koch-Nolte F."/>
        </authorList>
    </citation>
    <scope>FUNCTION AS AN ADP-RIBOSYLTRANSFERASE</scope>
    <scope>ACTIVITY REGULATION</scope>
    <scope>LACK OF NAD(+)-GLYCOHYDROLASE ACTIVITY</scope>
</reference>
<reference key="4">
    <citation type="journal article" date="2001" name="Mol. Microbiol.">
        <title>Actin is ADP-ribosylated by the Salmonella enterica virulence-associated protein SpvB.</title>
        <authorList>
            <person name="Tezcan-Merdol D."/>
            <person name="Nyman T."/>
            <person name="Lindberg U."/>
            <person name="Haag F."/>
            <person name="Koch-Nolte F."/>
            <person name="Rhen M."/>
        </authorList>
    </citation>
    <scope>ACTIN AS SUBSTRATE</scope>
    <scope>ACTIVITY REGULATION</scope>
</reference>
<reference key="5">
    <citation type="journal article" date="2006" name="Biochemistry">
        <title>Salmonella enterica SpvB ADP-ribosylates actin at position arginine-177-characterization of the catalytic domain within the SpvB protein and a comparison to binary clostridial actin-ADP-ribosylating toxins.</title>
        <authorList>
            <person name="Hochmann H."/>
            <person name="Pust S."/>
            <person name="von Figura G."/>
            <person name="Aktories K."/>
            <person name="Barth H."/>
        </authorList>
    </citation>
    <scope>FUNCTION AS AN ADP-RIBOSYLTRANSFERASE</scope>
    <scope>BIOPHYSICOCHEMICAL PROPERTIES</scope>
    <scope>ACTIN SUBSTRATES</scope>
    <scope>LACK OF NAD(+)-GLYCOHYDROLASE ACTIVITY</scope>
</reference>
<reference key="6">
    <citation type="journal article" date="2006" name="Structure">
        <title>A steric antagonism of actin polymerization by a Salmonella virulence protein.</title>
        <authorList>
            <person name="Margarit S.M."/>
            <person name="Davidson W."/>
            <person name="Frego L."/>
            <person name="Stebbins C.E."/>
        </authorList>
    </citation>
    <scope>X-RAY CRYSTALLOGRAPHY (1.5 ANGSTROMS) OF 391-590 IN COMPLEX WITH NAD</scope>
    <scope>FUNCTION AS A MONO-ADP-RIBOSYLTRANSFERASE</scope>
</reference>
<accession>P21454</accession>
<geneLocation type="plasmid">
    <name>pEX102</name>
</geneLocation>
<dbReference type="EC" id="2.4.2.31"/>
<dbReference type="EMBL" id="Z15042">
    <property type="protein sequence ID" value="CAA78760.1"/>
    <property type="molecule type" value="Genomic_DNA"/>
</dbReference>
<dbReference type="PIR" id="S15215">
    <property type="entry name" value="S15215"/>
</dbReference>
<dbReference type="PDB" id="2GWL">
    <property type="method" value="X-ray"/>
    <property type="resolution" value="1.90 A"/>
    <property type="chains" value="A=392-591"/>
</dbReference>
<dbReference type="PDB" id="2GWM">
    <property type="method" value="X-ray"/>
    <property type="resolution" value="1.50 A"/>
    <property type="chains" value="A=391-590"/>
</dbReference>
<dbReference type="PDBsum" id="2GWL"/>
<dbReference type="PDBsum" id="2GWM"/>
<dbReference type="SMR" id="P21454"/>
<dbReference type="DIP" id="DIP-29142N"/>
<dbReference type="IntAct" id="P21454">
    <property type="interactions" value="1"/>
</dbReference>
<dbReference type="EvolutionaryTrace" id="P21454"/>
<dbReference type="PHI-base" id="PHI:11126"/>
<dbReference type="PHI-base" id="PHI:11982"/>
<dbReference type="PHI-base" id="PHI:2628"/>
<dbReference type="PHI-base" id="PHI:5438"/>
<dbReference type="PHI-base" id="PHI:5569"/>
<dbReference type="GO" id="GO:0005737">
    <property type="term" value="C:cytoplasm"/>
    <property type="evidence" value="ECO:0007669"/>
    <property type="project" value="InterPro"/>
</dbReference>
<dbReference type="GO" id="GO:0005576">
    <property type="term" value="C:extracellular region"/>
    <property type="evidence" value="ECO:0007669"/>
    <property type="project" value="UniProtKB-SubCell"/>
</dbReference>
<dbReference type="GO" id="GO:0106274">
    <property type="term" value="F:NAD+-protein-arginine ADP-ribosyltransferase activity"/>
    <property type="evidence" value="ECO:0007669"/>
    <property type="project" value="UniProtKB-EC"/>
</dbReference>
<dbReference type="GO" id="GO:0000166">
    <property type="term" value="F:nucleotide binding"/>
    <property type="evidence" value="ECO:0007669"/>
    <property type="project" value="UniProtKB-KW"/>
</dbReference>
<dbReference type="GO" id="GO:0016779">
    <property type="term" value="F:nucleotidyltransferase activity"/>
    <property type="evidence" value="ECO:0007669"/>
    <property type="project" value="UniProtKB-KW"/>
</dbReference>
<dbReference type="GO" id="GO:0090729">
    <property type="term" value="F:toxin activity"/>
    <property type="evidence" value="ECO:0007669"/>
    <property type="project" value="UniProtKB-KW"/>
</dbReference>
<dbReference type="GO" id="GO:0141034">
    <property type="term" value="P:symbiont-mediated perturbation of host actin cytoskeleton via inhibition of actin polymerization"/>
    <property type="evidence" value="ECO:0000269"/>
    <property type="project" value="SigSci"/>
</dbReference>
<dbReference type="Gene3D" id="3.90.176.10">
    <property type="entry name" value="Toxin ADP-ribosyltransferase, Chain A, domain 1"/>
    <property type="match status" value="1"/>
</dbReference>
<dbReference type="InterPro" id="IPR003540">
    <property type="entry name" value="ADP-ribosyltransferase"/>
</dbReference>
<dbReference type="InterPro" id="IPR003284">
    <property type="entry name" value="Sal_SpvB"/>
</dbReference>
<dbReference type="NCBIfam" id="NF011780">
    <property type="entry name" value="PRK15244.1"/>
    <property type="match status" value="1"/>
</dbReference>
<dbReference type="Pfam" id="PF03496">
    <property type="entry name" value="ADPrib_exo_Tox"/>
    <property type="match status" value="1"/>
</dbReference>
<dbReference type="Pfam" id="PF03534">
    <property type="entry name" value="SpvB"/>
    <property type="match status" value="1"/>
</dbReference>
<dbReference type="PRINTS" id="PR01341">
    <property type="entry name" value="SALSPVBPROT"/>
</dbReference>
<dbReference type="SUPFAM" id="SSF56399">
    <property type="entry name" value="ADP-ribosylation"/>
    <property type="match status" value="1"/>
</dbReference>
<dbReference type="PROSITE" id="PS51996">
    <property type="entry name" value="TR_MART"/>
    <property type="match status" value="1"/>
</dbReference>
<sequence>MLILNGFSSATLALITPPFLPKGGKALSQSGPDGLASITLPLPISAERGFAPALALPYSSGGGNGPFGVGWSCATMSIARRTSHGVPQYNDSDEFLGPDGEVLVQTLSTGDAPNPVTCFAYGDVSFPQSYTVTRYQPRTESSFYRLEYWVGNSNGDDFWLLHDSNGILHLLGKTAAARLSDPQAASHTAQWLVEESVTPAGEHIYYSYLAENGDNVDLNGNEAGRDRSAMRYLSKVQYGNATPAADLYLWTSATPAVQWLFTLVFDYGERGVDPQVPPAFTAQNSWLARQDPFSLYNYGFEIRLLRLCRQVLMFHHFPDELGEADTLVSRLLLEYDENPIRTQLCAARTLAYEGDGYRRAPVNNMMPPPPPPPMMGGNSSRPKSKWAIVEESKQIQALRYYSAQGYSVINKYLRGDDYPETQAKETLLSRDYLSTNEPSDEEFKNAMSVYINDIAEGLSSLPETDHRVVYRGLKLDKPALSDVLKEYTTIVNIIIDKAFMSTSPDKAWINDTILNIYLEKGHKGRILGDVAHFKGEAEMLFPPNTKLKIESIVNCGSQDFASQLSKLRLSDDATADTNRIKRIINMRVLNS</sequence>
<comment type="function">
    <text evidence="2 4 5">Mono-ADP-ribosylates eukaryotic muscle and non-muscle actin on 'Arg-177'. ADP-ribosylates all actins tested, has more activity on nonmuscle beta/gamma-actin than on muscle alpha-actin. Prefers monomeric G-actin but can weakly ADP-ribosylate F-actin. ADP-ribosylation prevents the polymerization of G-actin to F-actin, causing actin filament depolymerization, destruction of the cytoskeleton and cytotoxicity. Does not possess NAD(+)-glycohydrolase activity, unlike most mART enzymes.</text>
</comment>
<comment type="catalytic activity">
    <reaction>
        <text>L-arginyl-[protein] + NAD(+) = N(omega)-(ADP-D-ribosyl)-L-arginyl-[protein] + nicotinamide + H(+)</text>
        <dbReference type="Rhea" id="RHEA:19149"/>
        <dbReference type="Rhea" id="RHEA-COMP:10532"/>
        <dbReference type="Rhea" id="RHEA-COMP:15087"/>
        <dbReference type="ChEBI" id="CHEBI:15378"/>
        <dbReference type="ChEBI" id="CHEBI:17154"/>
        <dbReference type="ChEBI" id="CHEBI:29965"/>
        <dbReference type="ChEBI" id="CHEBI:57540"/>
        <dbReference type="ChEBI" id="CHEBI:142554"/>
        <dbReference type="EC" id="2.4.2.31"/>
    </reaction>
</comment>
<comment type="activity regulation">
    <text evidence="2 3">Inhibited by novobiocin.</text>
</comment>
<comment type="biophysicochemical properties">
    <kinetics>
        <KM evidence="4">4.4 uM for NAD</KM>
        <text>For a catalytic domain encompassing residues 375-591, measured on Drosophila melanogaster Act88F indirect flight muscle actin.</text>
    </kinetics>
    <phDependence>
        <text evidence="4">Optimum pH is 7-8.</text>
    </phDependence>
</comment>
<comment type="interaction">
    <interactant intactId="EBI-15595598">
        <id>P21454</id>
    </interactant>
    <interactant intactId="EBI-367540">
        <id>P68135</id>
        <label>ACTA1</label>
    </interactant>
    <organismsDiffer>true</organismsDiffer>
    <experiments>2</experiments>
</comment>
<comment type="subcellular location">
    <subcellularLocation>
        <location>Secreted</location>
    </subcellularLocation>
    <text evidence="6">Secreted via the type III secretion system 2 (SPI-2 T3SS).</text>
</comment>
<comment type="miscellaneous">
    <text>In Salmonella spp. the spv gene cluster is encoded on a highly transmissible plasmid.</text>
</comment>
<comment type="similarity">
    <text evidence="6">Belongs to the SpvB family.</text>
</comment>